<keyword id="KW-1185">Reference proteome</keyword>
<keyword id="KW-0687">Ribonucleoprotein</keyword>
<keyword id="KW-0689">Ribosomal protein</keyword>
<evidence type="ECO:0000255" key="1">
    <source>
        <dbReference type="HAMAP-Rule" id="MF_00291"/>
    </source>
</evidence>
<evidence type="ECO:0000256" key="2">
    <source>
        <dbReference type="SAM" id="MobiDB-lite"/>
    </source>
</evidence>
<evidence type="ECO:0000305" key="3"/>
<comment type="similarity">
    <text evidence="1">Belongs to the universal ribosomal protein uS2 family.</text>
</comment>
<organism>
    <name type="scientific">Cytophaga hutchinsonii (strain ATCC 33406 / DSM 1761 / CIP 103989 / NBRC 15051 / NCIMB 9469 / D465)</name>
    <dbReference type="NCBI Taxonomy" id="269798"/>
    <lineage>
        <taxon>Bacteria</taxon>
        <taxon>Pseudomonadati</taxon>
        <taxon>Bacteroidota</taxon>
        <taxon>Cytophagia</taxon>
        <taxon>Cytophagales</taxon>
        <taxon>Cytophagaceae</taxon>
        <taxon>Cytophaga</taxon>
    </lineage>
</organism>
<gene>
    <name evidence="1" type="primary">rpsB</name>
    <name type="ordered locus">CHU_3037</name>
</gene>
<protein>
    <recommendedName>
        <fullName evidence="1">Small ribosomal subunit protein uS2</fullName>
    </recommendedName>
    <alternativeName>
        <fullName evidence="3">30S ribosomal protein S2</fullName>
    </alternativeName>
</protein>
<dbReference type="EMBL" id="CP000383">
    <property type="protein sequence ID" value="ABG60278.1"/>
    <property type="molecule type" value="Genomic_DNA"/>
</dbReference>
<dbReference type="RefSeq" id="WP_011586388.1">
    <property type="nucleotide sequence ID" value="NC_008255.1"/>
</dbReference>
<dbReference type="SMR" id="Q11QN6"/>
<dbReference type="STRING" id="269798.CHU_3037"/>
<dbReference type="KEGG" id="chu:CHU_3037"/>
<dbReference type="eggNOG" id="COG0052">
    <property type="taxonomic scope" value="Bacteria"/>
</dbReference>
<dbReference type="HOGENOM" id="CLU_040318_0_2_10"/>
<dbReference type="OrthoDB" id="9808036at2"/>
<dbReference type="Proteomes" id="UP000001822">
    <property type="component" value="Chromosome"/>
</dbReference>
<dbReference type="GO" id="GO:0022627">
    <property type="term" value="C:cytosolic small ribosomal subunit"/>
    <property type="evidence" value="ECO:0007669"/>
    <property type="project" value="TreeGrafter"/>
</dbReference>
<dbReference type="GO" id="GO:0003735">
    <property type="term" value="F:structural constituent of ribosome"/>
    <property type="evidence" value="ECO:0007669"/>
    <property type="project" value="InterPro"/>
</dbReference>
<dbReference type="GO" id="GO:0006412">
    <property type="term" value="P:translation"/>
    <property type="evidence" value="ECO:0007669"/>
    <property type="project" value="UniProtKB-UniRule"/>
</dbReference>
<dbReference type="CDD" id="cd01425">
    <property type="entry name" value="RPS2"/>
    <property type="match status" value="1"/>
</dbReference>
<dbReference type="FunFam" id="1.10.287.610:FF:000001">
    <property type="entry name" value="30S ribosomal protein S2"/>
    <property type="match status" value="1"/>
</dbReference>
<dbReference type="Gene3D" id="3.40.50.10490">
    <property type="entry name" value="Glucose-6-phosphate isomerase like protein, domain 1"/>
    <property type="match status" value="1"/>
</dbReference>
<dbReference type="Gene3D" id="1.10.287.610">
    <property type="entry name" value="Helix hairpin bin"/>
    <property type="match status" value="1"/>
</dbReference>
<dbReference type="HAMAP" id="MF_00291_B">
    <property type="entry name" value="Ribosomal_uS2_B"/>
    <property type="match status" value="1"/>
</dbReference>
<dbReference type="InterPro" id="IPR001865">
    <property type="entry name" value="Ribosomal_uS2"/>
</dbReference>
<dbReference type="InterPro" id="IPR005706">
    <property type="entry name" value="Ribosomal_uS2_bac/mit/plastid"/>
</dbReference>
<dbReference type="InterPro" id="IPR018130">
    <property type="entry name" value="Ribosomal_uS2_CS"/>
</dbReference>
<dbReference type="InterPro" id="IPR023591">
    <property type="entry name" value="Ribosomal_uS2_flav_dom_sf"/>
</dbReference>
<dbReference type="NCBIfam" id="TIGR01011">
    <property type="entry name" value="rpsB_bact"/>
    <property type="match status" value="1"/>
</dbReference>
<dbReference type="PANTHER" id="PTHR12534">
    <property type="entry name" value="30S RIBOSOMAL PROTEIN S2 PROKARYOTIC AND ORGANELLAR"/>
    <property type="match status" value="1"/>
</dbReference>
<dbReference type="PANTHER" id="PTHR12534:SF0">
    <property type="entry name" value="SMALL RIBOSOMAL SUBUNIT PROTEIN US2M"/>
    <property type="match status" value="1"/>
</dbReference>
<dbReference type="Pfam" id="PF00318">
    <property type="entry name" value="Ribosomal_S2"/>
    <property type="match status" value="1"/>
</dbReference>
<dbReference type="PRINTS" id="PR00395">
    <property type="entry name" value="RIBOSOMALS2"/>
</dbReference>
<dbReference type="SUPFAM" id="SSF52313">
    <property type="entry name" value="Ribosomal protein S2"/>
    <property type="match status" value="1"/>
</dbReference>
<dbReference type="PROSITE" id="PS00963">
    <property type="entry name" value="RIBOSOMAL_S2_2"/>
    <property type="match status" value="1"/>
</dbReference>
<reference key="1">
    <citation type="journal article" date="2007" name="Appl. Environ. Microbiol.">
        <title>Genome sequence of the cellulolytic gliding bacterium Cytophaga hutchinsonii.</title>
        <authorList>
            <person name="Xie G."/>
            <person name="Bruce D.C."/>
            <person name="Challacombe J.F."/>
            <person name="Chertkov O."/>
            <person name="Detter J.C."/>
            <person name="Gilna P."/>
            <person name="Han C.S."/>
            <person name="Lucas S."/>
            <person name="Misra M."/>
            <person name="Myers G.L."/>
            <person name="Richardson P."/>
            <person name="Tapia R."/>
            <person name="Thayer N."/>
            <person name="Thompson L.S."/>
            <person name="Brettin T.S."/>
            <person name="Henrissat B."/>
            <person name="Wilson D.B."/>
            <person name="McBride M.J."/>
        </authorList>
    </citation>
    <scope>NUCLEOTIDE SEQUENCE [LARGE SCALE GENOMIC DNA]</scope>
    <source>
        <strain>ATCC 33406 / DSM 1761 / JCM 20678 / CIP 103989 / IAM 12607 / NBRC 15051 / NCIMB 9469 / D465</strain>
    </source>
</reference>
<name>RS2_CYTH3</name>
<proteinExistence type="inferred from homology"/>
<feature type="chain" id="PRO_1000003944" description="Small ribosomal subunit protein uS2">
    <location>
        <begin position="1"/>
        <end position="254"/>
    </location>
</feature>
<feature type="region of interest" description="Disordered" evidence="2">
    <location>
        <begin position="225"/>
        <end position="254"/>
    </location>
</feature>
<feature type="compositionally biased region" description="Basic and acidic residues" evidence="2">
    <location>
        <begin position="226"/>
        <end position="254"/>
    </location>
</feature>
<accession>Q11QN6</accession>
<sequence length="254" mass="28470">MAKKIEYKDLLDAGVHFGHLTRKWNPKMAPYIFMEKNGIHLIDLNKTLVCLDEANAALKTIVRSGRKVLFVATKKQAQEVVTAEAKRLKMPYATERWLGGMLTNFATVRKSLKKMSSMEKMMKDEAFSSLNKKERLVLSREKEKLEKVLGGIADLTRLPAAIFVVDVKKEHIAIAEAKKLGIPVFAIVDTNSDPTIVDFPIPANDDAFKSISILTQAIGQGIEDALSERKREKDDAKLKEDEESKKASDKAEIQ</sequence>